<comment type="function">
    <text evidence="1">Cleaves peptides in various proteins in a process that requires ATP hydrolysis. Has a chymotrypsin-like activity. Plays a major role in the degradation of misfolded proteins.</text>
</comment>
<comment type="catalytic activity">
    <reaction evidence="1">
        <text>Hydrolysis of proteins to small peptides in the presence of ATP and magnesium. alpha-casein is the usual test substrate. In the absence of ATP, only oligopeptides shorter than five residues are hydrolyzed (such as succinyl-Leu-Tyr-|-NHMec, and Leu-Tyr-Leu-|-Tyr-Trp, in which cleavage of the -Tyr-|-Leu- and -Tyr-|-Trp bonds also occurs).</text>
        <dbReference type="EC" id="3.4.21.92"/>
    </reaction>
</comment>
<comment type="subunit">
    <text evidence="1">Fourteen ClpP subunits assemble into 2 heptameric rings which stack back to back to give a disk-like structure with a central cavity, resembling the structure of eukaryotic proteasomes.</text>
</comment>
<comment type="subcellular location">
    <subcellularLocation>
        <location evidence="1">Cytoplasm</location>
    </subcellularLocation>
</comment>
<comment type="similarity">
    <text evidence="1">Belongs to the peptidase S14 family.</text>
</comment>
<evidence type="ECO:0000255" key="1">
    <source>
        <dbReference type="HAMAP-Rule" id="MF_00444"/>
    </source>
</evidence>
<sequence length="209" mass="23161">MSEMQMPEMRYILPSFVEHSSYGAKESNPYNKLFEERIIFLGTQVDDASANDIMAQLLVLEGLDPDRDITMYINSPGGSFTSLMAIYDTMQYVRPDVQTVCLGQAASAAAVLLAAGTPGKRAALPNARVLIHQPATGGVQGQVSDLEIQAKEIERMRKLMEETLARHTGKSAEQVRIDTDRDKILTAEEAKEYGIVDQVFDYRKLSAQN</sequence>
<keyword id="KW-0963">Cytoplasm</keyword>
<keyword id="KW-0378">Hydrolase</keyword>
<keyword id="KW-0645">Protease</keyword>
<keyword id="KW-1185">Reference proteome</keyword>
<keyword id="KW-0720">Serine protease</keyword>
<dbReference type="EC" id="3.4.21.92" evidence="1"/>
<dbReference type="EMBL" id="CR931997">
    <property type="protein sequence ID" value="CAI36704.1"/>
    <property type="molecule type" value="Genomic_DNA"/>
</dbReference>
<dbReference type="RefSeq" id="WP_011273209.1">
    <property type="nucleotide sequence ID" value="NC_007164.1"/>
</dbReference>
<dbReference type="SMR" id="Q4JWV3"/>
<dbReference type="STRING" id="306537.jk0545"/>
<dbReference type="MEROPS" id="S14.009"/>
<dbReference type="KEGG" id="cjk:jk0545"/>
<dbReference type="eggNOG" id="COG0740">
    <property type="taxonomic scope" value="Bacteria"/>
</dbReference>
<dbReference type="HOGENOM" id="CLU_058707_3_2_11"/>
<dbReference type="Proteomes" id="UP000000545">
    <property type="component" value="Chromosome"/>
</dbReference>
<dbReference type="GO" id="GO:0005737">
    <property type="term" value="C:cytoplasm"/>
    <property type="evidence" value="ECO:0007669"/>
    <property type="project" value="UniProtKB-SubCell"/>
</dbReference>
<dbReference type="GO" id="GO:0009368">
    <property type="term" value="C:endopeptidase Clp complex"/>
    <property type="evidence" value="ECO:0007669"/>
    <property type="project" value="TreeGrafter"/>
</dbReference>
<dbReference type="GO" id="GO:0004176">
    <property type="term" value="F:ATP-dependent peptidase activity"/>
    <property type="evidence" value="ECO:0007669"/>
    <property type="project" value="InterPro"/>
</dbReference>
<dbReference type="GO" id="GO:0051117">
    <property type="term" value="F:ATPase binding"/>
    <property type="evidence" value="ECO:0007669"/>
    <property type="project" value="TreeGrafter"/>
</dbReference>
<dbReference type="GO" id="GO:0004252">
    <property type="term" value="F:serine-type endopeptidase activity"/>
    <property type="evidence" value="ECO:0007669"/>
    <property type="project" value="UniProtKB-UniRule"/>
</dbReference>
<dbReference type="GO" id="GO:0006515">
    <property type="term" value="P:protein quality control for misfolded or incompletely synthesized proteins"/>
    <property type="evidence" value="ECO:0007669"/>
    <property type="project" value="TreeGrafter"/>
</dbReference>
<dbReference type="CDD" id="cd07017">
    <property type="entry name" value="S14_ClpP_2"/>
    <property type="match status" value="1"/>
</dbReference>
<dbReference type="FunFam" id="3.90.226.10:FF:000002">
    <property type="entry name" value="ATP-dependent Clp protease proteolytic subunit"/>
    <property type="match status" value="1"/>
</dbReference>
<dbReference type="Gene3D" id="3.90.226.10">
    <property type="entry name" value="2-enoyl-CoA Hydratase, Chain A, domain 1"/>
    <property type="match status" value="1"/>
</dbReference>
<dbReference type="HAMAP" id="MF_00444">
    <property type="entry name" value="ClpP"/>
    <property type="match status" value="1"/>
</dbReference>
<dbReference type="InterPro" id="IPR001907">
    <property type="entry name" value="ClpP"/>
</dbReference>
<dbReference type="InterPro" id="IPR029045">
    <property type="entry name" value="ClpP/crotonase-like_dom_sf"/>
</dbReference>
<dbReference type="InterPro" id="IPR023562">
    <property type="entry name" value="ClpP/TepA"/>
</dbReference>
<dbReference type="InterPro" id="IPR033135">
    <property type="entry name" value="ClpP_His_AS"/>
</dbReference>
<dbReference type="InterPro" id="IPR018215">
    <property type="entry name" value="ClpP_Ser_AS"/>
</dbReference>
<dbReference type="NCBIfam" id="NF001368">
    <property type="entry name" value="PRK00277.1"/>
    <property type="match status" value="1"/>
</dbReference>
<dbReference type="NCBIfam" id="NF009205">
    <property type="entry name" value="PRK12553.1"/>
    <property type="match status" value="1"/>
</dbReference>
<dbReference type="PANTHER" id="PTHR10381">
    <property type="entry name" value="ATP-DEPENDENT CLP PROTEASE PROTEOLYTIC SUBUNIT"/>
    <property type="match status" value="1"/>
</dbReference>
<dbReference type="PANTHER" id="PTHR10381:SF26">
    <property type="entry name" value="ATP-DEPENDENT CLP PROTEASE PROTEOLYTIC SUBUNIT-LIKE-RELATED"/>
    <property type="match status" value="1"/>
</dbReference>
<dbReference type="Pfam" id="PF00574">
    <property type="entry name" value="CLP_protease"/>
    <property type="match status" value="1"/>
</dbReference>
<dbReference type="PRINTS" id="PR00127">
    <property type="entry name" value="CLPPROTEASEP"/>
</dbReference>
<dbReference type="SUPFAM" id="SSF52096">
    <property type="entry name" value="ClpP/crotonase"/>
    <property type="match status" value="1"/>
</dbReference>
<dbReference type="PROSITE" id="PS00382">
    <property type="entry name" value="CLP_PROTEASE_HIS"/>
    <property type="match status" value="1"/>
</dbReference>
<dbReference type="PROSITE" id="PS00381">
    <property type="entry name" value="CLP_PROTEASE_SER"/>
    <property type="match status" value="1"/>
</dbReference>
<gene>
    <name evidence="1" type="primary">clpP2</name>
    <name type="ordered locus">jk0545</name>
</gene>
<organism>
    <name type="scientific">Corynebacterium jeikeium (strain K411)</name>
    <dbReference type="NCBI Taxonomy" id="306537"/>
    <lineage>
        <taxon>Bacteria</taxon>
        <taxon>Bacillati</taxon>
        <taxon>Actinomycetota</taxon>
        <taxon>Actinomycetes</taxon>
        <taxon>Mycobacteriales</taxon>
        <taxon>Corynebacteriaceae</taxon>
        <taxon>Corynebacterium</taxon>
    </lineage>
</organism>
<protein>
    <recommendedName>
        <fullName evidence="1">ATP-dependent Clp protease proteolytic subunit 2</fullName>
        <ecNumber evidence="1">3.4.21.92</ecNumber>
    </recommendedName>
    <alternativeName>
        <fullName evidence="1">Endopeptidase Clp 2</fullName>
    </alternativeName>
</protein>
<accession>Q4JWV3</accession>
<proteinExistence type="inferred from homology"/>
<name>CLPP2_CORJK</name>
<reference key="1">
    <citation type="journal article" date="2005" name="J. Bacteriol.">
        <title>Complete genome sequence and analysis of the multiresistant nosocomial pathogen Corynebacterium jeikeium K411, a lipid-requiring bacterium of the human skin flora.</title>
        <authorList>
            <person name="Tauch A."/>
            <person name="Kaiser O."/>
            <person name="Hain T."/>
            <person name="Goesmann A."/>
            <person name="Weisshaar B."/>
            <person name="Albersmeier A."/>
            <person name="Bekel T."/>
            <person name="Bischoff N."/>
            <person name="Brune I."/>
            <person name="Chakraborty T."/>
            <person name="Kalinowski J."/>
            <person name="Meyer F."/>
            <person name="Rupp O."/>
            <person name="Schneiker S."/>
            <person name="Viehoever P."/>
            <person name="Puehler A."/>
        </authorList>
    </citation>
    <scope>NUCLEOTIDE SEQUENCE [LARGE SCALE GENOMIC DNA]</scope>
    <source>
        <strain>K411</strain>
    </source>
</reference>
<feature type="chain" id="PRO_0000226442" description="ATP-dependent Clp protease proteolytic subunit 2">
    <location>
        <begin position="1"/>
        <end position="209"/>
    </location>
</feature>
<feature type="active site" description="Nucleophile" evidence="1">
    <location>
        <position position="107"/>
    </location>
</feature>
<feature type="active site" evidence="1">
    <location>
        <position position="132"/>
    </location>
</feature>